<name>CYB_PELMA</name>
<proteinExistence type="inferred from homology"/>
<feature type="chain" id="PRO_0000061367" description="Cytochrome b">
    <location>
        <begin position="1"/>
        <end position="380"/>
    </location>
</feature>
<feature type="transmembrane region" description="Helical" evidence="2">
    <location>
        <begin position="34"/>
        <end position="54"/>
    </location>
</feature>
<feature type="transmembrane region" description="Helical" evidence="2">
    <location>
        <begin position="78"/>
        <end position="99"/>
    </location>
</feature>
<feature type="transmembrane region" description="Helical" evidence="2">
    <location>
        <begin position="114"/>
        <end position="134"/>
    </location>
</feature>
<feature type="transmembrane region" description="Helical" evidence="2">
    <location>
        <begin position="179"/>
        <end position="199"/>
    </location>
</feature>
<feature type="transmembrane region" description="Helical" evidence="2">
    <location>
        <begin position="227"/>
        <end position="247"/>
    </location>
</feature>
<feature type="transmembrane region" description="Helical" evidence="2">
    <location>
        <begin position="289"/>
        <end position="309"/>
    </location>
</feature>
<feature type="transmembrane region" description="Helical" evidence="2">
    <location>
        <begin position="321"/>
        <end position="341"/>
    </location>
</feature>
<feature type="transmembrane region" description="Helical" evidence="2">
    <location>
        <begin position="348"/>
        <end position="368"/>
    </location>
</feature>
<feature type="binding site" description="axial binding residue" evidence="2">
    <location>
        <position position="84"/>
    </location>
    <ligand>
        <name>heme b</name>
        <dbReference type="ChEBI" id="CHEBI:60344"/>
        <label>b562</label>
    </ligand>
    <ligandPart>
        <name>Fe</name>
        <dbReference type="ChEBI" id="CHEBI:18248"/>
    </ligandPart>
</feature>
<feature type="binding site" description="axial binding residue" evidence="2">
    <location>
        <position position="98"/>
    </location>
    <ligand>
        <name>heme b</name>
        <dbReference type="ChEBI" id="CHEBI:60344"/>
        <label>b566</label>
    </ligand>
    <ligandPart>
        <name>Fe</name>
        <dbReference type="ChEBI" id="CHEBI:18248"/>
    </ligandPart>
</feature>
<feature type="binding site" description="axial binding residue" evidence="2">
    <location>
        <position position="183"/>
    </location>
    <ligand>
        <name>heme b</name>
        <dbReference type="ChEBI" id="CHEBI:60344"/>
        <label>b562</label>
    </ligand>
    <ligandPart>
        <name>Fe</name>
        <dbReference type="ChEBI" id="CHEBI:18248"/>
    </ligandPart>
</feature>
<feature type="binding site" description="axial binding residue" evidence="2">
    <location>
        <position position="197"/>
    </location>
    <ligand>
        <name>heme b</name>
        <dbReference type="ChEBI" id="CHEBI:60344"/>
        <label>b566</label>
    </ligand>
    <ligandPart>
        <name>Fe</name>
        <dbReference type="ChEBI" id="CHEBI:18248"/>
    </ligandPart>
</feature>
<feature type="binding site" evidence="2">
    <location>
        <position position="202"/>
    </location>
    <ligand>
        <name>a ubiquinone</name>
        <dbReference type="ChEBI" id="CHEBI:16389"/>
    </ligand>
</feature>
<keyword id="KW-0249">Electron transport</keyword>
<keyword id="KW-0349">Heme</keyword>
<keyword id="KW-0408">Iron</keyword>
<keyword id="KW-0472">Membrane</keyword>
<keyword id="KW-0479">Metal-binding</keyword>
<keyword id="KW-0496">Mitochondrion</keyword>
<keyword id="KW-0999">Mitochondrion inner membrane</keyword>
<keyword id="KW-0679">Respiratory chain</keyword>
<keyword id="KW-0812">Transmembrane</keyword>
<keyword id="KW-1133">Transmembrane helix</keyword>
<keyword id="KW-0813">Transport</keyword>
<keyword id="KW-0830">Ubiquinone</keyword>
<evidence type="ECO:0000250" key="1"/>
<evidence type="ECO:0000250" key="2">
    <source>
        <dbReference type="UniProtKB" id="P00157"/>
    </source>
</evidence>
<evidence type="ECO:0000255" key="3">
    <source>
        <dbReference type="PROSITE-ProRule" id="PRU00967"/>
    </source>
</evidence>
<evidence type="ECO:0000255" key="4">
    <source>
        <dbReference type="PROSITE-ProRule" id="PRU00968"/>
    </source>
</evidence>
<accession>O79217</accession>
<comment type="function">
    <text evidence="2">Component of the ubiquinol-cytochrome c reductase complex (complex III or cytochrome b-c1 complex) that is part of the mitochondrial respiratory chain. The b-c1 complex mediates electron transfer from ubiquinol to cytochrome c. Contributes to the generation of a proton gradient across the mitochondrial membrane that is then used for ATP synthesis.</text>
</comment>
<comment type="cofactor">
    <cofactor evidence="2">
        <name>heme b</name>
        <dbReference type="ChEBI" id="CHEBI:60344"/>
    </cofactor>
    <text evidence="2">Binds 2 heme b groups non-covalently.</text>
</comment>
<comment type="subunit">
    <text evidence="2">The cytochrome bc1 complex contains 11 subunits: 3 respiratory subunits (MT-CYB, CYC1 and UQCRFS1), 2 core proteins (UQCRC1 and UQCRC2) and 6 low-molecular weight proteins (UQCRH/QCR6, UQCRB/QCR7, UQCRQ/QCR8, UQCR10/QCR9, UQCR11/QCR10 and a cleavage product of UQCRFS1). This cytochrome bc1 complex then forms a dimer.</text>
</comment>
<comment type="subcellular location">
    <subcellularLocation>
        <location evidence="2">Mitochondrion inner membrane</location>
        <topology evidence="2">Multi-pass membrane protein</topology>
    </subcellularLocation>
</comment>
<comment type="miscellaneous">
    <text evidence="1">Heme 1 (or BL or b562) is low-potential and absorbs at about 562 nm, and heme 2 (or BH or b566) is high-potential and absorbs at about 566 nm.</text>
</comment>
<comment type="similarity">
    <text evidence="3 4">Belongs to the cytochrome b family.</text>
</comment>
<comment type="caution">
    <text evidence="2">The full-length protein contains only eight transmembrane helices, not nine as predicted by bioinformatics tools.</text>
</comment>
<dbReference type="EMBL" id="AF076072">
    <property type="protein sequence ID" value="AAC68629.1"/>
    <property type="molecule type" value="Genomic_DNA"/>
</dbReference>
<dbReference type="SMR" id="O79217"/>
<dbReference type="GO" id="GO:0005743">
    <property type="term" value="C:mitochondrial inner membrane"/>
    <property type="evidence" value="ECO:0007669"/>
    <property type="project" value="UniProtKB-SubCell"/>
</dbReference>
<dbReference type="GO" id="GO:0045275">
    <property type="term" value="C:respiratory chain complex III"/>
    <property type="evidence" value="ECO:0007669"/>
    <property type="project" value="InterPro"/>
</dbReference>
<dbReference type="GO" id="GO:0046872">
    <property type="term" value="F:metal ion binding"/>
    <property type="evidence" value="ECO:0007669"/>
    <property type="project" value="UniProtKB-KW"/>
</dbReference>
<dbReference type="GO" id="GO:0008121">
    <property type="term" value="F:ubiquinol-cytochrome-c reductase activity"/>
    <property type="evidence" value="ECO:0007669"/>
    <property type="project" value="InterPro"/>
</dbReference>
<dbReference type="GO" id="GO:0006122">
    <property type="term" value="P:mitochondrial electron transport, ubiquinol to cytochrome c"/>
    <property type="evidence" value="ECO:0007669"/>
    <property type="project" value="TreeGrafter"/>
</dbReference>
<dbReference type="CDD" id="cd00290">
    <property type="entry name" value="cytochrome_b_C"/>
    <property type="match status" value="1"/>
</dbReference>
<dbReference type="CDD" id="cd00284">
    <property type="entry name" value="Cytochrome_b_N"/>
    <property type="match status" value="1"/>
</dbReference>
<dbReference type="FunFam" id="1.20.810.10:FF:000002">
    <property type="entry name" value="Cytochrome b"/>
    <property type="match status" value="1"/>
</dbReference>
<dbReference type="Gene3D" id="1.20.810.10">
    <property type="entry name" value="Cytochrome Bc1 Complex, Chain C"/>
    <property type="match status" value="1"/>
</dbReference>
<dbReference type="InterPro" id="IPR005798">
    <property type="entry name" value="Cyt_b/b6_C"/>
</dbReference>
<dbReference type="InterPro" id="IPR036150">
    <property type="entry name" value="Cyt_b/b6_C_sf"/>
</dbReference>
<dbReference type="InterPro" id="IPR005797">
    <property type="entry name" value="Cyt_b/b6_N"/>
</dbReference>
<dbReference type="InterPro" id="IPR027387">
    <property type="entry name" value="Cytb/b6-like_sf"/>
</dbReference>
<dbReference type="InterPro" id="IPR030689">
    <property type="entry name" value="Cytochrome_b"/>
</dbReference>
<dbReference type="InterPro" id="IPR048260">
    <property type="entry name" value="Cytochrome_b_C_euk/bac"/>
</dbReference>
<dbReference type="InterPro" id="IPR048259">
    <property type="entry name" value="Cytochrome_b_N_euk/bac"/>
</dbReference>
<dbReference type="InterPro" id="IPR016174">
    <property type="entry name" value="Di-haem_cyt_TM"/>
</dbReference>
<dbReference type="PANTHER" id="PTHR19271">
    <property type="entry name" value="CYTOCHROME B"/>
    <property type="match status" value="1"/>
</dbReference>
<dbReference type="PANTHER" id="PTHR19271:SF16">
    <property type="entry name" value="CYTOCHROME B"/>
    <property type="match status" value="1"/>
</dbReference>
<dbReference type="Pfam" id="PF00032">
    <property type="entry name" value="Cytochrom_B_C"/>
    <property type="match status" value="1"/>
</dbReference>
<dbReference type="Pfam" id="PF00033">
    <property type="entry name" value="Cytochrome_B"/>
    <property type="match status" value="1"/>
</dbReference>
<dbReference type="PIRSF" id="PIRSF038885">
    <property type="entry name" value="COB"/>
    <property type="match status" value="1"/>
</dbReference>
<dbReference type="SUPFAM" id="SSF81648">
    <property type="entry name" value="a domain/subunit of cytochrome bc1 complex (Ubiquinol-cytochrome c reductase)"/>
    <property type="match status" value="1"/>
</dbReference>
<dbReference type="SUPFAM" id="SSF81342">
    <property type="entry name" value="Transmembrane di-heme cytochromes"/>
    <property type="match status" value="1"/>
</dbReference>
<dbReference type="PROSITE" id="PS51003">
    <property type="entry name" value="CYTB_CTER"/>
    <property type="match status" value="1"/>
</dbReference>
<dbReference type="PROSITE" id="PS51002">
    <property type="entry name" value="CYTB_NTER"/>
    <property type="match status" value="1"/>
</dbReference>
<reference key="1">
    <citation type="journal article" date="1998" name="Mol. Biol. Evol.">
        <title>Body size effects and rates of cytochrome-b evolution in tube-nosed seabirds.</title>
        <authorList>
            <person name="Nunn G.B."/>
            <person name="Stanley S.E."/>
        </authorList>
    </citation>
    <scope>NUCLEOTIDE SEQUENCE [GENOMIC DNA]</scope>
    <source>
        <strain>Isolate WSP-G-1</strain>
    </source>
</reference>
<gene>
    <name type="primary">MT-CYB</name>
    <name type="synonym">COB</name>
    <name type="synonym">CYTB</name>
    <name type="synonym">MTCYB</name>
</gene>
<protein>
    <recommendedName>
        <fullName>Cytochrome b</fullName>
    </recommendedName>
    <alternativeName>
        <fullName>Complex III subunit 3</fullName>
    </alternativeName>
    <alternativeName>
        <fullName>Complex III subunit III</fullName>
    </alternativeName>
    <alternativeName>
        <fullName>Cytochrome b-c1 complex subunit 3</fullName>
    </alternativeName>
    <alternativeName>
        <fullName>Ubiquinol-cytochrome-c reductase complex cytochrome b subunit</fullName>
    </alternativeName>
</protein>
<organism>
    <name type="scientific">Pelagodroma marina</name>
    <name type="common">White-faced storm-petrel</name>
    <dbReference type="NCBI Taxonomy" id="37075"/>
    <lineage>
        <taxon>Eukaryota</taxon>
        <taxon>Metazoa</taxon>
        <taxon>Chordata</taxon>
        <taxon>Craniata</taxon>
        <taxon>Vertebrata</taxon>
        <taxon>Euteleostomi</taxon>
        <taxon>Archelosauria</taxon>
        <taxon>Archosauria</taxon>
        <taxon>Dinosauria</taxon>
        <taxon>Saurischia</taxon>
        <taxon>Theropoda</taxon>
        <taxon>Coelurosauria</taxon>
        <taxon>Aves</taxon>
        <taxon>Neognathae</taxon>
        <taxon>Neoaves</taxon>
        <taxon>Aequornithes</taxon>
        <taxon>Procellariiformes</taxon>
        <taxon>Hydrobatidae</taxon>
        <taxon>Pelagodroma</taxon>
    </lineage>
</organism>
<geneLocation type="mitochondrion"/>
<sequence>MAPNLRKSHPLLKMINNSLIDLPTPSNISAWWNFGSLLGICLATQILTGLLLAMHYTADTTLAFSSVTHTCRNVQYGWLIRNLHANGASFFFICIYLHIGRGLYYGSYLYKETWNTGILLLLTLMATAFVGYVLPWGQMSFWGATVITNLFSAIPYIGQTIVEWAWGGFSVDNPTLTRFFALHFLLPFVIAGLTLIHLTFLHESGSNNPLGLVSNCDKIPFHPYFSLKDILGFMLMFLSLTTLALFSPNLLGDPENFTPANPLVTPPHIKPEWYFLFAYAILRSIPNKLGGVLALAASVLMMFLSPLLHKSKQRTMAFRPLSQLLFWTLVANLFILTWVGSQPVEHPFIIIGQLASFTYFTILLILLPITGALENKMLNY</sequence>